<proteinExistence type="evidence at protein level"/>
<protein>
    <recommendedName>
        <fullName>Chymotrypsin-2</fullName>
        <ecNumber>3.4.21.1</ecNumber>
    </recommendedName>
    <alternativeName>
        <fullName>Chymotrypsin II</fullName>
    </alternativeName>
</protein>
<keyword id="KW-0903">Direct protein sequencing</keyword>
<keyword id="KW-1015">Disulfide bond</keyword>
<keyword id="KW-0378">Hydrolase</keyword>
<keyword id="KW-0645">Protease</keyword>
<keyword id="KW-0964">Secreted</keyword>
<keyword id="KW-0720">Serine protease</keyword>
<dbReference type="EC" id="3.4.21.1"/>
<dbReference type="PIR" id="A00955">
    <property type="entry name" value="KYVH2C"/>
</dbReference>
<dbReference type="SMR" id="P00769"/>
<dbReference type="MEROPS" id="S01.438"/>
<dbReference type="GO" id="GO:0005576">
    <property type="term" value="C:extracellular region"/>
    <property type="evidence" value="ECO:0007669"/>
    <property type="project" value="UniProtKB-SubCell"/>
</dbReference>
<dbReference type="GO" id="GO:0004252">
    <property type="term" value="F:serine-type endopeptidase activity"/>
    <property type="evidence" value="ECO:0007669"/>
    <property type="project" value="UniProtKB-EC"/>
</dbReference>
<dbReference type="GO" id="GO:0006508">
    <property type="term" value="P:proteolysis"/>
    <property type="evidence" value="ECO:0007669"/>
    <property type="project" value="UniProtKB-KW"/>
</dbReference>
<dbReference type="CDD" id="cd00190">
    <property type="entry name" value="Tryp_SPc"/>
    <property type="match status" value="1"/>
</dbReference>
<dbReference type="FunFam" id="2.40.10.10:FF:000047">
    <property type="entry name" value="Trypsin eta"/>
    <property type="match status" value="1"/>
</dbReference>
<dbReference type="Gene3D" id="2.40.10.10">
    <property type="entry name" value="Trypsin-like serine proteases"/>
    <property type="match status" value="2"/>
</dbReference>
<dbReference type="InterPro" id="IPR050430">
    <property type="entry name" value="Peptidase_S1"/>
</dbReference>
<dbReference type="InterPro" id="IPR009003">
    <property type="entry name" value="Peptidase_S1_PA"/>
</dbReference>
<dbReference type="InterPro" id="IPR043504">
    <property type="entry name" value="Peptidase_S1_PA_chymotrypsin"/>
</dbReference>
<dbReference type="InterPro" id="IPR001314">
    <property type="entry name" value="Peptidase_S1A"/>
</dbReference>
<dbReference type="InterPro" id="IPR001254">
    <property type="entry name" value="Trypsin_dom"/>
</dbReference>
<dbReference type="InterPro" id="IPR018114">
    <property type="entry name" value="TRYPSIN_HIS"/>
</dbReference>
<dbReference type="InterPro" id="IPR033116">
    <property type="entry name" value="TRYPSIN_SER"/>
</dbReference>
<dbReference type="PANTHER" id="PTHR24276:SF98">
    <property type="entry name" value="FI18310P1-RELATED"/>
    <property type="match status" value="1"/>
</dbReference>
<dbReference type="PANTHER" id="PTHR24276">
    <property type="entry name" value="POLYSERASE-RELATED"/>
    <property type="match status" value="1"/>
</dbReference>
<dbReference type="Pfam" id="PF00089">
    <property type="entry name" value="Trypsin"/>
    <property type="match status" value="1"/>
</dbReference>
<dbReference type="PRINTS" id="PR00722">
    <property type="entry name" value="CHYMOTRYPSIN"/>
</dbReference>
<dbReference type="SMART" id="SM00020">
    <property type="entry name" value="Tryp_SPc"/>
    <property type="match status" value="1"/>
</dbReference>
<dbReference type="SUPFAM" id="SSF50494">
    <property type="entry name" value="Trypsin-like serine proteases"/>
    <property type="match status" value="1"/>
</dbReference>
<dbReference type="PROSITE" id="PS50240">
    <property type="entry name" value="TRYPSIN_DOM"/>
    <property type="match status" value="1"/>
</dbReference>
<dbReference type="PROSITE" id="PS00134">
    <property type="entry name" value="TRYPSIN_HIS"/>
    <property type="match status" value="1"/>
</dbReference>
<dbReference type="PROSITE" id="PS00135">
    <property type="entry name" value="TRYPSIN_SER"/>
    <property type="match status" value="1"/>
</dbReference>
<evidence type="ECO:0000255" key="1">
    <source>
        <dbReference type="PROSITE-ProRule" id="PRU00274"/>
    </source>
</evidence>
<evidence type="ECO:0000255" key="2">
    <source>
        <dbReference type="PROSITE-ProRule" id="PRU10078"/>
    </source>
</evidence>
<evidence type="ECO:0000255" key="3">
    <source>
        <dbReference type="PROSITE-ProRule" id="PRU10079"/>
    </source>
</evidence>
<organism>
    <name type="scientific">Vespa crabro</name>
    <name type="common">European hornet</name>
    <dbReference type="NCBI Taxonomy" id="7445"/>
    <lineage>
        <taxon>Eukaryota</taxon>
        <taxon>Metazoa</taxon>
        <taxon>Ecdysozoa</taxon>
        <taxon>Arthropoda</taxon>
        <taxon>Hexapoda</taxon>
        <taxon>Insecta</taxon>
        <taxon>Pterygota</taxon>
        <taxon>Neoptera</taxon>
        <taxon>Endopterygota</taxon>
        <taxon>Hymenoptera</taxon>
        <taxon>Apocrita</taxon>
        <taxon>Aculeata</taxon>
        <taxon>Vespoidea</taxon>
        <taxon>Vespidae</taxon>
        <taxon>Vespinae</taxon>
        <taxon>Vespa</taxon>
    </lineage>
</organism>
<accession>P00769</accession>
<name>CTR2_VESCR</name>
<reference key="1">
    <citation type="journal article" date="1983" name="FEBS Lett.">
        <title>Amino acid sequence of the chymotryptic protease II from the larvae of the nornet, Vespa crabro.</title>
        <authorList>
            <person name="Jany K.-D."/>
            <person name="Haug H."/>
        </authorList>
    </citation>
    <scope>PROTEIN SEQUENCE</scope>
</reference>
<sequence>IVGGTDAPRGKYPYQVSLRAPKHFCGGSISKRYVLTAAHCLVGKSKHQVTVHAGSVLLNKEEAVYNAEELIVNKNYNSIRLINDIGLIRVSKDISYTQLVQPVKLPVSNTIKAGDPVVLTGWGRIYVNGPIPNNLQQITLSIVNQQTCKFKHWGLTDSQICTFTKLGEGACDGDSGGPLVANGVQIGIVSYGHPCAVGSPNVFTRVYSFLDWIQKNQL</sequence>
<comment type="catalytic activity">
    <reaction evidence="2 3">
        <text>Preferential cleavage: Tyr-|-Xaa, Trp-|-Xaa, Phe-|-Xaa, Leu-|-Xaa.</text>
        <dbReference type="EC" id="3.4.21.1"/>
    </reaction>
</comment>
<comment type="subcellular location">
    <subcellularLocation>
        <location>Secreted</location>
        <location>Extracellular space</location>
    </subcellularLocation>
</comment>
<comment type="miscellaneous">
    <text>An additional Arg at the carboxyl end was found in some of the molecules.</text>
</comment>
<comment type="similarity">
    <text evidence="1">Belongs to the peptidase S1 family.</text>
</comment>
<feature type="chain" id="PRO_0000088676" description="Chymotrypsin-2">
    <location>
        <begin position="1"/>
        <end position="218"/>
    </location>
</feature>
<feature type="domain" description="Peptidase S1" evidence="1">
    <location>
        <begin position="1"/>
        <end position="218"/>
    </location>
</feature>
<feature type="active site" description="Charge relay system">
    <location>
        <position position="39"/>
    </location>
</feature>
<feature type="active site" description="Charge relay system">
    <location>
        <position position="84"/>
    </location>
</feature>
<feature type="active site" description="Charge relay system">
    <location>
        <position position="175"/>
    </location>
</feature>
<feature type="disulfide bond">
    <location>
        <begin position="25"/>
        <end position="40"/>
    </location>
</feature>
<feature type="disulfide bond">
    <location>
        <begin position="148"/>
        <end position="161"/>
    </location>
</feature>
<feature type="disulfide bond">
    <location>
        <begin position="171"/>
        <end position="195"/>
    </location>
</feature>